<name>GUAA_HERAR</name>
<feature type="chain" id="PRO_1000120320" description="GMP synthase [glutamine-hydrolyzing]">
    <location>
        <begin position="1"/>
        <end position="539"/>
    </location>
</feature>
<feature type="domain" description="Glutamine amidotransferase type-1" evidence="1">
    <location>
        <begin position="4"/>
        <end position="203"/>
    </location>
</feature>
<feature type="domain" description="GMPS ATP-PPase" evidence="1">
    <location>
        <begin position="204"/>
        <end position="395"/>
    </location>
</feature>
<feature type="active site" description="Nucleophile" evidence="1">
    <location>
        <position position="82"/>
    </location>
</feature>
<feature type="active site" evidence="1">
    <location>
        <position position="177"/>
    </location>
</feature>
<feature type="active site" evidence="1">
    <location>
        <position position="179"/>
    </location>
</feature>
<feature type="binding site" evidence="1">
    <location>
        <begin position="231"/>
        <end position="237"/>
    </location>
    <ligand>
        <name>ATP</name>
        <dbReference type="ChEBI" id="CHEBI:30616"/>
    </ligand>
</feature>
<evidence type="ECO:0000255" key="1">
    <source>
        <dbReference type="HAMAP-Rule" id="MF_00344"/>
    </source>
</evidence>
<gene>
    <name evidence="1" type="primary">guaA</name>
    <name type="ordered locus">HEAR1361</name>
</gene>
<keyword id="KW-0067">ATP-binding</keyword>
<keyword id="KW-0315">Glutamine amidotransferase</keyword>
<keyword id="KW-0332">GMP biosynthesis</keyword>
<keyword id="KW-0436">Ligase</keyword>
<keyword id="KW-0547">Nucleotide-binding</keyword>
<keyword id="KW-0658">Purine biosynthesis</keyword>
<keyword id="KW-1185">Reference proteome</keyword>
<reference key="1">
    <citation type="journal article" date="2007" name="PLoS Genet.">
        <title>A tale of two oxidation states: bacterial colonization of arsenic-rich environments.</title>
        <authorList>
            <person name="Muller D."/>
            <person name="Medigue C."/>
            <person name="Koechler S."/>
            <person name="Barbe V."/>
            <person name="Barakat M."/>
            <person name="Talla E."/>
            <person name="Bonnefoy V."/>
            <person name="Krin E."/>
            <person name="Arsene-Ploetze F."/>
            <person name="Carapito C."/>
            <person name="Chandler M."/>
            <person name="Cournoyer B."/>
            <person name="Cruveiller S."/>
            <person name="Dossat C."/>
            <person name="Duval S."/>
            <person name="Heymann M."/>
            <person name="Leize E."/>
            <person name="Lieutaud A."/>
            <person name="Lievremont D."/>
            <person name="Makita Y."/>
            <person name="Mangenot S."/>
            <person name="Nitschke W."/>
            <person name="Ortet P."/>
            <person name="Perdrial N."/>
            <person name="Schoepp B."/>
            <person name="Siguier P."/>
            <person name="Simeonova D.D."/>
            <person name="Rouy Z."/>
            <person name="Segurens B."/>
            <person name="Turlin E."/>
            <person name="Vallenet D."/>
            <person name="van Dorsselaer A."/>
            <person name="Weiss S."/>
            <person name="Weissenbach J."/>
            <person name="Lett M.-C."/>
            <person name="Danchin A."/>
            <person name="Bertin P.N."/>
        </authorList>
    </citation>
    <scope>NUCLEOTIDE SEQUENCE [LARGE SCALE GENOMIC DNA]</scope>
    <source>
        <strain>ULPAs1</strain>
    </source>
</reference>
<comment type="function">
    <text evidence="1">Catalyzes the synthesis of GMP from XMP.</text>
</comment>
<comment type="catalytic activity">
    <reaction evidence="1">
        <text>XMP + L-glutamine + ATP + H2O = GMP + L-glutamate + AMP + diphosphate + 2 H(+)</text>
        <dbReference type="Rhea" id="RHEA:11680"/>
        <dbReference type="ChEBI" id="CHEBI:15377"/>
        <dbReference type="ChEBI" id="CHEBI:15378"/>
        <dbReference type="ChEBI" id="CHEBI:29985"/>
        <dbReference type="ChEBI" id="CHEBI:30616"/>
        <dbReference type="ChEBI" id="CHEBI:33019"/>
        <dbReference type="ChEBI" id="CHEBI:57464"/>
        <dbReference type="ChEBI" id="CHEBI:58115"/>
        <dbReference type="ChEBI" id="CHEBI:58359"/>
        <dbReference type="ChEBI" id="CHEBI:456215"/>
        <dbReference type="EC" id="6.3.5.2"/>
    </reaction>
</comment>
<comment type="pathway">
    <text evidence="1">Purine metabolism; GMP biosynthesis; GMP from XMP (L-Gln route): step 1/1.</text>
</comment>
<comment type="subunit">
    <text evidence="1">Homodimer.</text>
</comment>
<proteinExistence type="inferred from homology"/>
<accession>A4G4U7</accession>
<sequence>MHSKILILDFGSQVTQLIARRVRDSGVFSEVYPYDVSDEFVRNYGAAGVILSGGPNSVIEGDESPRVPQAVFELGVPVLGICYGMQAMAEQLGGKVENGTVREFGYAEVRAHGHTALLKDISDFTTPEGHGMLKVWMSHGDKVNEMPPGFKLMASTPNCPIAGMADEARHMYAFQFHPEVTHTLQGKAIIARFVHDICGCKSDWNMPDYIAEAVEKIRQQVGNDEVILGLSGGVDSSVAAALIHRAIGDQLTCVFVDHGLLRLDEGKMVMEMFADHLGVNVIRIDAVDQFMGHLAGVTDPEAKRKIIGREFVEVFQVEAGKRKNAKWLAQGTIYPDVIESAGKGKKGHTIKSHHNVGGLPETLNLQLLEPLRELFKDEVRQLGVALGLPHDMVYRHPFPGPGLGVRILGEVKKDFADLLRRADAIFIEELRNTPYVLAAGASESTDNGIPHRNWYDATSQAFAVFLPVKSVGVMGDGRTYEYVVALRAVQTQDFMTAHWAHLPYELLGKVSNRIINEVRGINRVVYDISGKPPATIEWE</sequence>
<dbReference type="EC" id="6.3.5.2" evidence="1"/>
<dbReference type="EMBL" id="CU207211">
    <property type="protein sequence ID" value="CAL61534.1"/>
    <property type="molecule type" value="Genomic_DNA"/>
</dbReference>
<dbReference type="SMR" id="A4G4U7"/>
<dbReference type="STRING" id="204773.HEAR1361"/>
<dbReference type="MEROPS" id="C26.957"/>
<dbReference type="KEGG" id="har:HEAR1361"/>
<dbReference type="eggNOG" id="COG0518">
    <property type="taxonomic scope" value="Bacteria"/>
</dbReference>
<dbReference type="eggNOG" id="COG0519">
    <property type="taxonomic scope" value="Bacteria"/>
</dbReference>
<dbReference type="HOGENOM" id="CLU_014340_0_5_4"/>
<dbReference type="OrthoDB" id="9802219at2"/>
<dbReference type="UniPathway" id="UPA00189">
    <property type="reaction ID" value="UER00296"/>
</dbReference>
<dbReference type="Proteomes" id="UP000006697">
    <property type="component" value="Chromosome"/>
</dbReference>
<dbReference type="GO" id="GO:0005829">
    <property type="term" value="C:cytosol"/>
    <property type="evidence" value="ECO:0007669"/>
    <property type="project" value="TreeGrafter"/>
</dbReference>
<dbReference type="GO" id="GO:0005524">
    <property type="term" value="F:ATP binding"/>
    <property type="evidence" value="ECO:0007669"/>
    <property type="project" value="UniProtKB-UniRule"/>
</dbReference>
<dbReference type="GO" id="GO:0003921">
    <property type="term" value="F:GMP synthase activity"/>
    <property type="evidence" value="ECO:0007669"/>
    <property type="project" value="InterPro"/>
</dbReference>
<dbReference type="CDD" id="cd01742">
    <property type="entry name" value="GATase1_GMP_Synthase"/>
    <property type="match status" value="1"/>
</dbReference>
<dbReference type="CDD" id="cd01997">
    <property type="entry name" value="GMP_synthase_C"/>
    <property type="match status" value="1"/>
</dbReference>
<dbReference type="FunFam" id="3.30.300.10:FF:000002">
    <property type="entry name" value="GMP synthase [glutamine-hydrolyzing]"/>
    <property type="match status" value="1"/>
</dbReference>
<dbReference type="FunFam" id="3.40.50.620:FF:000001">
    <property type="entry name" value="GMP synthase [glutamine-hydrolyzing]"/>
    <property type="match status" value="1"/>
</dbReference>
<dbReference type="FunFam" id="3.40.50.880:FF:000001">
    <property type="entry name" value="GMP synthase [glutamine-hydrolyzing]"/>
    <property type="match status" value="1"/>
</dbReference>
<dbReference type="Gene3D" id="3.30.300.10">
    <property type="match status" value="1"/>
</dbReference>
<dbReference type="Gene3D" id="3.40.50.880">
    <property type="match status" value="1"/>
</dbReference>
<dbReference type="Gene3D" id="3.40.50.620">
    <property type="entry name" value="HUPs"/>
    <property type="match status" value="1"/>
</dbReference>
<dbReference type="HAMAP" id="MF_00344">
    <property type="entry name" value="GMP_synthase"/>
    <property type="match status" value="1"/>
</dbReference>
<dbReference type="InterPro" id="IPR029062">
    <property type="entry name" value="Class_I_gatase-like"/>
</dbReference>
<dbReference type="InterPro" id="IPR017926">
    <property type="entry name" value="GATASE"/>
</dbReference>
<dbReference type="InterPro" id="IPR001674">
    <property type="entry name" value="GMP_synth_C"/>
</dbReference>
<dbReference type="InterPro" id="IPR004739">
    <property type="entry name" value="GMP_synth_GATase"/>
</dbReference>
<dbReference type="InterPro" id="IPR022955">
    <property type="entry name" value="GMP_synthase"/>
</dbReference>
<dbReference type="InterPro" id="IPR025777">
    <property type="entry name" value="GMPS_ATP_PPase_dom"/>
</dbReference>
<dbReference type="InterPro" id="IPR022310">
    <property type="entry name" value="NAD/GMP_synthase"/>
</dbReference>
<dbReference type="InterPro" id="IPR014729">
    <property type="entry name" value="Rossmann-like_a/b/a_fold"/>
</dbReference>
<dbReference type="NCBIfam" id="TIGR00884">
    <property type="entry name" value="guaA_Cterm"/>
    <property type="match status" value="1"/>
</dbReference>
<dbReference type="NCBIfam" id="TIGR00888">
    <property type="entry name" value="guaA_Nterm"/>
    <property type="match status" value="1"/>
</dbReference>
<dbReference type="NCBIfam" id="NF000848">
    <property type="entry name" value="PRK00074.1"/>
    <property type="match status" value="1"/>
</dbReference>
<dbReference type="PANTHER" id="PTHR11922:SF2">
    <property type="entry name" value="GMP SYNTHASE [GLUTAMINE-HYDROLYZING]"/>
    <property type="match status" value="1"/>
</dbReference>
<dbReference type="PANTHER" id="PTHR11922">
    <property type="entry name" value="GMP SYNTHASE-RELATED"/>
    <property type="match status" value="1"/>
</dbReference>
<dbReference type="Pfam" id="PF00117">
    <property type="entry name" value="GATase"/>
    <property type="match status" value="1"/>
</dbReference>
<dbReference type="Pfam" id="PF00958">
    <property type="entry name" value="GMP_synt_C"/>
    <property type="match status" value="1"/>
</dbReference>
<dbReference type="Pfam" id="PF02540">
    <property type="entry name" value="NAD_synthase"/>
    <property type="match status" value="1"/>
</dbReference>
<dbReference type="PRINTS" id="PR00097">
    <property type="entry name" value="ANTSNTHASEII"/>
</dbReference>
<dbReference type="PRINTS" id="PR00096">
    <property type="entry name" value="GATASE"/>
</dbReference>
<dbReference type="SUPFAM" id="SSF52402">
    <property type="entry name" value="Adenine nucleotide alpha hydrolases-like"/>
    <property type="match status" value="1"/>
</dbReference>
<dbReference type="SUPFAM" id="SSF52317">
    <property type="entry name" value="Class I glutamine amidotransferase-like"/>
    <property type="match status" value="1"/>
</dbReference>
<dbReference type="SUPFAM" id="SSF54810">
    <property type="entry name" value="GMP synthetase C-terminal dimerisation domain"/>
    <property type="match status" value="1"/>
</dbReference>
<dbReference type="PROSITE" id="PS51273">
    <property type="entry name" value="GATASE_TYPE_1"/>
    <property type="match status" value="1"/>
</dbReference>
<dbReference type="PROSITE" id="PS51553">
    <property type="entry name" value="GMPS_ATP_PPASE"/>
    <property type="match status" value="1"/>
</dbReference>
<protein>
    <recommendedName>
        <fullName evidence="1">GMP synthase [glutamine-hydrolyzing]</fullName>
        <ecNumber evidence="1">6.3.5.2</ecNumber>
    </recommendedName>
    <alternativeName>
        <fullName evidence="1">GMP synthetase</fullName>
    </alternativeName>
    <alternativeName>
        <fullName evidence="1">Glutamine amidotransferase</fullName>
    </alternativeName>
</protein>
<organism>
    <name type="scientific">Herminiimonas arsenicoxydans</name>
    <dbReference type="NCBI Taxonomy" id="204773"/>
    <lineage>
        <taxon>Bacteria</taxon>
        <taxon>Pseudomonadati</taxon>
        <taxon>Pseudomonadota</taxon>
        <taxon>Betaproteobacteria</taxon>
        <taxon>Burkholderiales</taxon>
        <taxon>Oxalobacteraceae</taxon>
        <taxon>Herminiimonas</taxon>
    </lineage>
</organism>